<comment type="cofactor">
    <cofactor evidence="2">
        <name>Fe(2+)</name>
        <dbReference type="ChEBI" id="CHEBI:29033"/>
    </cofactor>
    <text evidence="2">Binds 2 Fe(2+) ions per subunit.</text>
</comment>
<comment type="similarity">
    <text evidence="4">Belongs to the cyclic nucleotide phosphodiesterase class-III family.</text>
</comment>
<proteinExistence type="inferred from homology"/>
<dbReference type="EC" id="3.1.4.-" evidence="1"/>
<dbReference type="EMBL" id="CP000713">
    <property type="protein sequence ID" value="ABQ93140.1"/>
    <property type="molecule type" value="Genomic_DNA"/>
</dbReference>
<dbReference type="SMR" id="A5WBU9"/>
<dbReference type="STRING" id="349106.PsycPRwf_0181"/>
<dbReference type="KEGG" id="prw:PsycPRwf_0181"/>
<dbReference type="eggNOG" id="COG1409">
    <property type="taxonomic scope" value="Bacteria"/>
</dbReference>
<dbReference type="HOGENOM" id="CLU_070320_0_0_6"/>
<dbReference type="GO" id="GO:0004115">
    <property type="term" value="F:3',5'-cyclic-AMP phosphodiesterase activity"/>
    <property type="evidence" value="ECO:0007669"/>
    <property type="project" value="UniProtKB-EC"/>
</dbReference>
<dbReference type="GO" id="GO:0046872">
    <property type="term" value="F:metal ion binding"/>
    <property type="evidence" value="ECO:0007669"/>
    <property type="project" value="UniProtKB-KW"/>
</dbReference>
<dbReference type="GO" id="GO:0000166">
    <property type="term" value="F:nucleotide binding"/>
    <property type="evidence" value="ECO:0007669"/>
    <property type="project" value="UniProtKB-KW"/>
</dbReference>
<dbReference type="Gene3D" id="3.60.21.10">
    <property type="match status" value="1"/>
</dbReference>
<dbReference type="InterPro" id="IPR004843">
    <property type="entry name" value="Calcineurin-like_PHP_ApaH"/>
</dbReference>
<dbReference type="InterPro" id="IPR050884">
    <property type="entry name" value="CNP_phosphodiesterase-III"/>
</dbReference>
<dbReference type="InterPro" id="IPR029052">
    <property type="entry name" value="Metallo-depent_PP-like"/>
</dbReference>
<dbReference type="PANTHER" id="PTHR42988:SF2">
    <property type="entry name" value="CYCLIC NUCLEOTIDE PHOSPHODIESTERASE CBUA0032-RELATED"/>
    <property type="match status" value="1"/>
</dbReference>
<dbReference type="PANTHER" id="PTHR42988">
    <property type="entry name" value="PHOSPHOHYDROLASE"/>
    <property type="match status" value="1"/>
</dbReference>
<dbReference type="Pfam" id="PF00149">
    <property type="entry name" value="Metallophos"/>
    <property type="match status" value="1"/>
</dbReference>
<dbReference type="SUPFAM" id="SSF56300">
    <property type="entry name" value="Metallo-dependent phosphatases"/>
    <property type="match status" value="1"/>
</dbReference>
<evidence type="ECO:0000250" key="1">
    <source>
        <dbReference type="UniProtKB" id="P9WP65"/>
    </source>
</evidence>
<evidence type="ECO:0000250" key="2">
    <source>
        <dbReference type="UniProtKB" id="Q6XBH1"/>
    </source>
</evidence>
<evidence type="ECO:0000256" key="3">
    <source>
        <dbReference type="SAM" id="MobiDB-lite"/>
    </source>
</evidence>
<evidence type="ECO:0000305" key="4"/>
<feature type="chain" id="PRO_0000413375" description="Probable cyclic nucleotide phosphodiesterase PsycPRwf_0181">
    <location>
        <begin position="1"/>
        <end position="340"/>
    </location>
</feature>
<feature type="region of interest" description="Disordered" evidence="3">
    <location>
        <begin position="1"/>
        <end position="36"/>
    </location>
</feature>
<feature type="binding site" evidence="2">
    <location>
        <position position="47"/>
    </location>
    <ligand>
        <name>Fe cation</name>
        <dbReference type="ChEBI" id="CHEBI:24875"/>
        <label>1</label>
    </ligand>
</feature>
<feature type="binding site" evidence="1">
    <location>
        <position position="49"/>
    </location>
    <ligand>
        <name>AMP</name>
        <dbReference type="ChEBI" id="CHEBI:456215"/>
    </ligand>
</feature>
<feature type="binding site" evidence="2">
    <location>
        <position position="49"/>
    </location>
    <ligand>
        <name>Fe cation</name>
        <dbReference type="ChEBI" id="CHEBI:24875"/>
        <label>1</label>
    </ligand>
</feature>
<feature type="binding site" evidence="1">
    <location>
        <position position="128"/>
    </location>
    <ligand>
        <name>AMP</name>
        <dbReference type="ChEBI" id="CHEBI:456215"/>
    </ligand>
</feature>
<feature type="binding site" evidence="2">
    <location>
        <position position="128"/>
    </location>
    <ligand>
        <name>Fe cation</name>
        <dbReference type="ChEBI" id="CHEBI:24875"/>
        <label>1</label>
    </ligand>
</feature>
<feature type="binding site" evidence="2">
    <location>
        <position position="128"/>
    </location>
    <ligand>
        <name>Fe cation</name>
        <dbReference type="ChEBI" id="CHEBI:24875"/>
        <label>2</label>
    </ligand>
</feature>
<feature type="binding site" evidence="1">
    <location>
        <begin position="158"/>
        <end position="159"/>
    </location>
    <ligand>
        <name>AMP</name>
        <dbReference type="ChEBI" id="CHEBI:456215"/>
    </ligand>
</feature>
<feature type="binding site" evidence="2">
    <location>
        <position position="158"/>
    </location>
    <ligand>
        <name>Fe cation</name>
        <dbReference type="ChEBI" id="CHEBI:24875"/>
        <label>2</label>
    </ligand>
</feature>
<feature type="binding site" evidence="2">
    <location>
        <position position="237"/>
    </location>
    <ligand>
        <name>Fe cation</name>
        <dbReference type="ChEBI" id="CHEBI:24875"/>
        <label>2</label>
    </ligand>
</feature>
<feature type="binding site" evidence="2">
    <location>
        <position position="276"/>
    </location>
    <ligand>
        <name>Fe cation</name>
        <dbReference type="ChEBI" id="CHEBI:24875"/>
        <label>2</label>
    </ligand>
</feature>
<feature type="binding site" evidence="1">
    <location>
        <position position="278"/>
    </location>
    <ligand>
        <name>AMP</name>
        <dbReference type="ChEBI" id="CHEBI:456215"/>
    </ligand>
</feature>
<feature type="binding site" evidence="2">
    <location>
        <position position="278"/>
    </location>
    <ligand>
        <name>Fe cation</name>
        <dbReference type="ChEBI" id="CHEBI:24875"/>
        <label>1</label>
    </ligand>
</feature>
<organism>
    <name type="scientific">Psychrobacter sp. (strain PRwf-1)</name>
    <dbReference type="NCBI Taxonomy" id="349106"/>
    <lineage>
        <taxon>Bacteria</taxon>
        <taxon>Pseudomonadati</taxon>
        <taxon>Pseudomonadota</taxon>
        <taxon>Gammaproteobacteria</taxon>
        <taxon>Moraxellales</taxon>
        <taxon>Moraxellaceae</taxon>
        <taxon>Psychrobacter</taxon>
    </lineage>
</organism>
<keyword id="KW-0378">Hydrolase</keyword>
<keyword id="KW-0408">Iron</keyword>
<keyword id="KW-0479">Metal-binding</keyword>
<keyword id="KW-0547">Nucleotide-binding</keyword>
<reference key="1">
    <citation type="submission" date="2007-05" db="EMBL/GenBank/DDBJ databases">
        <title>Complete sequence of chromosome of Psychrobacter sp. PRwf-1.</title>
        <authorList>
            <consortium name="US DOE Joint Genome Institute"/>
            <person name="Copeland A."/>
            <person name="Lucas S."/>
            <person name="Lapidus A."/>
            <person name="Barry K."/>
            <person name="Detter J.C."/>
            <person name="Glavina del Rio T."/>
            <person name="Hammon N."/>
            <person name="Israni S."/>
            <person name="Dalin E."/>
            <person name="Tice H."/>
            <person name="Pitluck S."/>
            <person name="Chain P."/>
            <person name="Malfatti S."/>
            <person name="Shin M."/>
            <person name="Vergez L."/>
            <person name="Schmutz J."/>
            <person name="Larimer F."/>
            <person name="Land M."/>
            <person name="Hauser L."/>
            <person name="Kyrpides N."/>
            <person name="Kim E."/>
            <person name="Tiedje J."/>
            <person name="Richardson P."/>
        </authorList>
    </citation>
    <scope>NUCLEOTIDE SEQUENCE [LARGE SCALE GENOMIC DNA]</scope>
    <source>
        <strain>PRwf-1</strain>
    </source>
</reference>
<protein>
    <recommendedName>
        <fullName evidence="1">Probable cyclic nucleotide phosphodiesterase PsycPRwf_0181</fullName>
        <ecNumber evidence="1">3.1.4.-</ecNumber>
    </recommendedName>
</protein>
<name>CNPD3_PSYWF</name>
<sequence length="340" mass="38004">MAPLPHSVSPRHTQVADNGRLSEPTDYHPPTEISTDDGTVNILQLTDLHLYFDTPKATHEQDINKDSAHQTITGICQNNSAKRGNPHSADAINHSVTPVIHNYASFEACLTQALSEDVRCDLIVVTGDLVSEIHPQLYQHLYQRLHQSGIPFACIAGNHDVTDEIGKDLPFEQRSFEPHEPDSRLLSRYSMKLNGWEILFINSSVPGQIFGRIGNKNLYWLSQKLANSHHPVIIAMHHHLLPMHSAWIDAHITQDATEFWQTVAPFNALKAVVGGHVHQSSTRSYQGVQLYSTPSTGYQFKPGCDDFTLDDEAKPGYRWLSLKANGTLQSWVVRLEDNAG</sequence>
<accession>A5WBU9</accession>
<gene>
    <name type="ordered locus">PsycPRwf_0181</name>
</gene>